<keyword id="KW-0143">Chaperone</keyword>
<keyword id="KW-0574">Periplasm</keyword>
<keyword id="KW-0653">Protein transport</keyword>
<keyword id="KW-0732">Signal</keyword>
<keyword id="KW-0813">Transport</keyword>
<reference key="1">
    <citation type="journal article" date="2000" name="Nature">
        <title>The genome sequence of the plant pathogen Xylella fastidiosa.</title>
        <authorList>
            <person name="Simpson A.J.G."/>
            <person name="Reinach F.C."/>
            <person name="Arruda P."/>
            <person name="Abreu F.A."/>
            <person name="Acencio M."/>
            <person name="Alvarenga R."/>
            <person name="Alves L.M.C."/>
            <person name="Araya J.E."/>
            <person name="Baia G.S."/>
            <person name="Baptista C.S."/>
            <person name="Barros M.H."/>
            <person name="Bonaccorsi E.D."/>
            <person name="Bordin S."/>
            <person name="Bove J.M."/>
            <person name="Briones M.R.S."/>
            <person name="Bueno M.R.P."/>
            <person name="Camargo A.A."/>
            <person name="Camargo L.E.A."/>
            <person name="Carraro D.M."/>
            <person name="Carrer H."/>
            <person name="Colauto N.B."/>
            <person name="Colombo C."/>
            <person name="Costa F.F."/>
            <person name="Costa M.C.R."/>
            <person name="Costa-Neto C.M."/>
            <person name="Coutinho L.L."/>
            <person name="Cristofani M."/>
            <person name="Dias-Neto E."/>
            <person name="Docena C."/>
            <person name="El-Dorry H."/>
            <person name="Facincani A.P."/>
            <person name="Ferreira A.J.S."/>
            <person name="Ferreira V.C.A."/>
            <person name="Ferro J.A."/>
            <person name="Fraga J.S."/>
            <person name="Franca S.C."/>
            <person name="Franco M.C."/>
            <person name="Frohme M."/>
            <person name="Furlan L.R."/>
            <person name="Garnier M."/>
            <person name="Goldman G.H."/>
            <person name="Goldman M.H.S."/>
            <person name="Gomes S.L."/>
            <person name="Gruber A."/>
            <person name="Ho P.L."/>
            <person name="Hoheisel J.D."/>
            <person name="Junqueira M.L."/>
            <person name="Kemper E.L."/>
            <person name="Kitajima J.P."/>
            <person name="Krieger J.E."/>
            <person name="Kuramae E.E."/>
            <person name="Laigret F."/>
            <person name="Lambais M.R."/>
            <person name="Leite L.C.C."/>
            <person name="Lemos E.G.M."/>
            <person name="Lemos M.V.F."/>
            <person name="Lopes S.A."/>
            <person name="Lopes C.R."/>
            <person name="Machado J.A."/>
            <person name="Machado M.A."/>
            <person name="Madeira A.M.B.N."/>
            <person name="Madeira H.M.F."/>
            <person name="Marino C.L."/>
            <person name="Marques M.V."/>
            <person name="Martins E.A.L."/>
            <person name="Martins E.M.F."/>
            <person name="Matsukuma A.Y."/>
            <person name="Menck C.F.M."/>
            <person name="Miracca E.C."/>
            <person name="Miyaki C.Y."/>
            <person name="Monteiro-Vitorello C.B."/>
            <person name="Moon D.H."/>
            <person name="Nagai M.A."/>
            <person name="Nascimento A.L.T.O."/>
            <person name="Netto L.E.S."/>
            <person name="Nhani A. Jr."/>
            <person name="Nobrega F.G."/>
            <person name="Nunes L.R."/>
            <person name="Oliveira M.A."/>
            <person name="de Oliveira M.C."/>
            <person name="de Oliveira R.C."/>
            <person name="Palmieri D.A."/>
            <person name="Paris A."/>
            <person name="Peixoto B.R."/>
            <person name="Pereira G.A.G."/>
            <person name="Pereira H.A. Jr."/>
            <person name="Pesquero J.B."/>
            <person name="Quaggio R.B."/>
            <person name="Roberto P.G."/>
            <person name="Rodrigues V."/>
            <person name="de Rosa A.J.M."/>
            <person name="de Rosa V.E. Jr."/>
            <person name="de Sa R.G."/>
            <person name="Santelli R.V."/>
            <person name="Sawasaki H.E."/>
            <person name="da Silva A.C.R."/>
            <person name="da Silva A.M."/>
            <person name="da Silva F.R."/>
            <person name="Silva W.A. Jr."/>
            <person name="da Silveira J.F."/>
            <person name="Silvestri M.L.Z."/>
            <person name="Siqueira W.J."/>
            <person name="de Souza A.A."/>
            <person name="de Souza A.P."/>
            <person name="Terenzi M.F."/>
            <person name="Truffi D."/>
            <person name="Tsai S.M."/>
            <person name="Tsuhako M.H."/>
            <person name="Vallada H."/>
            <person name="Van Sluys M.A."/>
            <person name="Verjovski-Almeida S."/>
            <person name="Vettore A.L."/>
            <person name="Zago M.A."/>
            <person name="Zatz M."/>
            <person name="Meidanis J."/>
            <person name="Setubal J.C."/>
        </authorList>
    </citation>
    <scope>NUCLEOTIDE SEQUENCE [LARGE SCALE GENOMIC DNA]</scope>
    <source>
        <strain>9a5c</strain>
    </source>
</reference>
<dbReference type="EMBL" id="AE003849">
    <property type="protein sequence ID" value="AAF84261.1"/>
    <property type="status" value="ALT_INIT"/>
    <property type="molecule type" value="Genomic_DNA"/>
</dbReference>
<dbReference type="PIR" id="E82679">
    <property type="entry name" value="E82679"/>
</dbReference>
<dbReference type="SMR" id="Q9PDC7"/>
<dbReference type="STRING" id="160492.XF_1452"/>
<dbReference type="KEGG" id="xfa:XF_1452"/>
<dbReference type="eggNOG" id="COG2834">
    <property type="taxonomic scope" value="Bacteria"/>
</dbReference>
<dbReference type="HOGENOM" id="CLU_087560_0_0_6"/>
<dbReference type="Proteomes" id="UP000000812">
    <property type="component" value="Chromosome"/>
</dbReference>
<dbReference type="GO" id="GO:0030288">
    <property type="term" value="C:outer membrane-bounded periplasmic space"/>
    <property type="evidence" value="ECO:0007669"/>
    <property type="project" value="TreeGrafter"/>
</dbReference>
<dbReference type="GO" id="GO:0044874">
    <property type="term" value="P:lipoprotein localization to outer membrane"/>
    <property type="evidence" value="ECO:0007669"/>
    <property type="project" value="UniProtKB-UniRule"/>
</dbReference>
<dbReference type="GO" id="GO:0042953">
    <property type="term" value="P:lipoprotein transport"/>
    <property type="evidence" value="ECO:0007669"/>
    <property type="project" value="InterPro"/>
</dbReference>
<dbReference type="CDD" id="cd16325">
    <property type="entry name" value="LolA"/>
    <property type="match status" value="1"/>
</dbReference>
<dbReference type="Gene3D" id="2.50.20.10">
    <property type="entry name" value="Lipoprotein localisation LolA/LolB/LppX"/>
    <property type="match status" value="1"/>
</dbReference>
<dbReference type="HAMAP" id="MF_00240">
    <property type="entry name" value="LolA"/>
    <property type="match status" value="1"/>
</dbReference>
<dbReference type="InterPro" id="IPR029046">
    <property type="entry name" value="LolA/LolB/LppX"/>
</dbReference>
<dbReference type="InterPro" id="IPR004564">
    <property type="entry name" value="OM_lipoprot_carrier_LolA-like"/>
</dbReference>
<dbReference type="InterPro" id="IPR018323">
    <property type="entry name" value="OM_lipoprot_carrier_LolA_Pbac"/>
</dbReference>
<dbReference type="PANTHER" id="PTHR35869">
    <property type="entry name" value="OUTER-MEMBRANE LIPOPROTEIN CARRIER PROTEIN"/>
    <property type="match status" value="1"/>
</dbReference>
<dbReference type="PANTHER" id="PTHR35869:SF1">
    <property type="entry name" value="OUTER-MEMBRANE LIPOPROTEIN CARRIER PROTEIN"/>
    <property type="match status" value="1"/>
</dbReference>
<dbReference type="Pfam" id="PF03548">
    <property type="entry name" value="LolA"/>
    <property type="match status" value="1"/>
</dbReference>
<dbReference type="SUPFAM" id="SSF89392">
    <property type="entry name" value="Prokaryotic lipoproteins and lipoprotein localization factors"/>
    <property type="match status" value="1"/>
</dbReference>
<feature type="signal peptide" evidence="2">
    <location>
        <begin position="1"/>
        <end position="23"/>
    </location>
</feature>
<feature type="chain" id="PRO_0000018287" description="Outer-membrane lipoprotein carrier protein">
    <location>
        <begin position="24"/>
        <end position="210"/>
    </location>
</feature>
<proteinExistence type="inferred from homology"/>
<organism>
    <name type="scientific">Xylella fastidiosa (strain 9a5c)</name>
    <dbReference type="NCBI Taxonomy" id="160492"/>
    <lineage>
        <taxon>Bacteria</taxon>
        <taxon>Pseudomonadati</taxon>
        <taxon>Pseudomonadota</taxon>
        <taxon>Gammaproteobacteria</taxon>
        <taxon>Lysobacterales</taxon>
        <taxon>Lysobacteraceae</taxon>
        <taxon>Xylella</taxon>
    </lineage>
</organism>
<accession>Q9PDC7</accession>
<evidence type="ECO:0000250" key="1"/>
<evidence type="ECO:0000255" key="2"/>
<evidence type="ECO:0000305" key="3"/>
<sequence>MPMFSRFRYIVFTVALLSGPVCAGPRADLSAFTRGLKTLQGHFSQEIIDTQGRVKERSNGTVALSLPNLLRWECDAPYKQLVVADGKRVWLFDPDLNQASVRLQGNEERNSPLIALIDPIQLDLKYDVSEEVAMRDGLRWLSLRPRVGIEASFQSASFGFAQTQLARMELVDNLGQRTVIVFSGWQRNPVFAVDTFRFTPGKNVDVIGDR</sequence>
<comment type="function">
    <text evidence="1">Participates in the translocation of lipoproteins from the inner membrane to the outer membrane. Only forms a complex with a lipoprotein if the residue after the N-terminal Cys is not an aspartate (The Asp acts as a targeting signal to indicate that the lipoprotein should stay in the inner membrane) (By similarity).</text>
</comment>
<comment type="subunit">
    <text evidence="1">Monomer.</text>
</comment>
<comment type="subcellular location">
    <subcellularLocation>
        <location evidence="1">Periplasm</location>
    </subcellularLocation>
</comment>
<comment type="similarity">
    <text evidence="3">Belongs to the LolA family.</text>
</comment>
<comment type="sequence caution" evidence="3">
    <conflict type="erroneous initiation">
        <sequence resource="EMBL-CDS" id="AAF84261"/>
    </conflict>
</comment>
<name>LOLA_XYLFA</name>
<gene>
    <name type="primary">lolA</name>
    <name type="ordered locus">XF_1452</name>
</gene>
<protein>
    <recommendedName>
        <fullName>Outer-membrane lipoprotein carrier protein</fullName>
    </recommendedName>
</protein>